<comment type="function">
    <text evidence="4">Mitochondrial intermembrane chaperone that participates in the import and insertion of multi-pass transmembrane proteins into the mitochondrial inner membrane. May also be required for the transfer of beta-barrel precursors from the TOM complex to the sorting and assembly machinery (SAM complex) of the outer membrane. Acts as a chaperone-like protein that protects the hydrophobic precursors from aggregation and guide them through the mitochondrial intermembrane space.</text>
</comment>
<comment type="subunit">
    <text evidence="4 5">Heterohexamer; composed of 3 copies of TIMM9 and 3 copies of TIMM10/TIM10A, named soluble 70 kDa complex. The complex forms a 6-bladed alpha-propeller structure and associates with the TIMM22 component of the TIM22 complex. Interacts with multi-pass transmembrane proteins in transit. Also forms a complex composed of TIMM9, TIMM10/TIM10A and FXC1/TIM10B.</text>
</comment>
<comment type="interaction">
    <interactant intactId="EBI-1200370">
        <id>Q9Y5J7</id>
    </interactant>
    <interactant intactId="EBI-1200391">
        <id>P62072</id>
        <label>TIMM10</label>
    </interactant>
    <organismsDiffer>false</organismsDiffer>
    <experiments>7</experiments>
</comment>
<comment type="subcellular location">
    <subcellularLocation>
        <location evidence="3 4">Mitochondrion inner membrane</location>
        <topology evidence="3 4">Peripheral membrane protein</topology>
        <orientation evidence="3 4">Intermembrane side</orientation>
    </subcellularLocation>
</comment>
<comment type="tissue specificity">
    <text evidence="1 2">Ubiquitous, with highest expression in heart, kidney, liver and skeletal muscle.</text>
</comment>
<comment type="domain">
    <text evidence="6">The twin CX3C motif contains 4 conserved Cys residues that form 2 disulfide bonds in the mitochondrial intermembrane space. However, during the transit of TIMM9 from cytoplasm into mitochondrion, the Cys residues probably coordinate zinc, thereby preventing folding and allowing its transfer across mitochondrial outer membrane (Probable).</text>
</comment>
<comment type="similarity">
    <text evidence="6">Belongs to the small Tim family.</text>
</comment>
<accession>Q9Y5J7</accession>
<accession>B2R584</accession>
<keyword id="KW-0002">3D-structure</keyword>
<keyword id="KW-0007">Acetylation</keyword>
<keyword id="KW-0143">Chaperone</keyword>
<keyword id="KW-1015">Disulfide bond</keyword>
<keyword id="KW-0472">Membrane</keyword>
<keyword id="KW-0479">Metal-binding</keyword>
<keyword id="KW-0496">Mitochondrion</keyword>
<keyword id="KW-0999">Mitochondrion inner membrane</keyword>
<keyword id="KW-0653">Protein transport</keyword>
<keyword id="KW-1267">Proteomics identification</keyword>
<keyword id="KW-1185">Reference proteome</keyword>
<keyword id="KW-0811">Translocation</keyword>
<keyword id="KW-0813">Transport</keyword>
<keyword id="KW-0862">Zinc</keyword>
<dbReference type="EMBL" id="AF150100">
    <property type="protein sequence ID" value="AAD40006.1"/>
    <property type="molecule type" value="mRNA"/>
</dbReference>
<dbReference type="EMBL" id="AF152353">
    <property type="protein sequence ID" value="AAF15103.1"/>
    <property type="molecule type" value="mRNA"/>
</dbReference>
<dbReference type="EMBL" id="AK312095">
    <property type="protein sequence ID" value="BAG35031.1"/>
    <property type="molecule type" value="mRNA"/>
</dbReference>
<dbReference type="EMBL" id="CH471061">
    <property type="protein sequence ID" value="EAW80735.1"/>
    <property type="molecule type" value="Genomic_DNA"/>
</dbReference>
<dbReference type="EMBL" id="BC020213">
    <property type="protein sequence ID" value="AAH20213.1"/>
    <property type="molecule type" value="mRNA"/>
</dbReference>
<dbReference type="EMBL" id="BC054875">
    <property type="protein sequence ID" value="AAH54875.1"/>
    <property type="molecule type" value="mRNA"/>
</dbReference>
<dbReference type="CCDS" id="CCDS9735.1"/>
<dbReference type="PIR" id="T51191">
    <property type="entry name" value="T51191"/>
</dbReference>
<dbReference type="RefSeq" id="NP_001291414.1">
    <property type="nucleotide sequence ID" value="NM_001304485.2"/>
</dbReference>
<dbReference type="RefSeq" id="NP_001291415.1">
    <property type="nucleotide sequence ID" value="NM_001304486.1"/>
</dbReference>
<dbReference type="RefSeq" id="NP_001291416.1">
    <property type="nucleotide sequence ID" value="NM_001304487.2"/>
</dbReference>
<dbReference type="RefSeq" id="NP_001291417.1">
    <property type="nucleotide sequence ID" value="NM_001304488.1"/>
</dbReference>
<dbReference type="RefSeq" id="NP_001291418.1">
    <property type="nucleotide sequence ID" value="NM_001304489.1"/>
</dbReference>
<dbReference type="RefSeq" id="NP_001291419.1">
    <property type="nucleotide sequence ID" value="NM_001304490.1"/>
</dbReference>
<dbReference type="RefSeq" id="NP_001291420.1">
    <property type="nucleotide sequence ID" value="NM_001304491.1"/>
</dbReference>
<dbReference type="RefSeq" id="NP_036592.1">
    <property type="nucleotide sequence ID" value="NM_012460.4"/>
</dbReference>
<dbReference type="RefSeq" id="XP_047287220.1">
    <property type="nucleotide sequence ID" value="XM_047431264.1"/>
</dbReference>
<dbReference type="RefSeq" id="XP_054231828.1">
    <property type="nucleotide sequence ID" value="XM_054375853.1"/>
</dbReference>
<dbReference type="PDB" id="2BSK">
    <property type="method" value="X-ray"/>
    <property type="resolution" value="3.30 A"/>
    <property type="chains" value="A/C/E=1-89"/>
</dbReference>
<dbReference type="PDB" id="7CGP">
    <property type="method" value="EM"/>
    <property type="resolution" value="3.70 A"/>
    <property type="chains" value="D/E/F/K/L=1-89"/>
</dbReference>
<dbReference type="PDBsum" id="2BSK"/>
<dbReference type="PDBsum" id="7CGP"/>
<dbReference type="SMR" id="Q9Y5J7"/>
<dbReference type="BioGRID" id="117724">
    <property type="interactions" value="51"/>
</dbReference>
<dbReference type="ComplexPortal" id="CPX-6124">
    <property type="entry name" value="TIM22 mitochondrial inner membrane twin-pore carrier translocase complex"/>
</dbReference>
<dbReference type="ComplexPortal" id="CPX-6125">
    <property type="entry name" value="TIM9-TIM10 mitochondrial intermembrane space protein transporter complex"/>
</dbReference>
<dbReference type="ComplexPortal" id="CPX-6126">
    <property type="entry name" value="TIM9-TIM10-TIM10B mitochondrial intermembrane space protein transporter complex"/>
</dbReference>
<dbReference type="CORUM" id="Q9Y5J7"/>
<dbReference type="FunCoup" id="Q9Y5J7">
    <property type="interactions" value="2327"/>
</dbReference>
<dbReference type="IntAct" id="Q9Y5J7">
    <property type="interactions" value="17"/>
</dbReference>
<dbReference type="MINT" id="Q9Y5J7"/>
<dbReference type="STRING" id="9606.ENSP00000378588"/>
<dbReference type="iPTMnet" id="Q9Y5J7"/>
<dbReference type="PhosphoSitePlus" id="Q9Y5J7"/>
<dbReference type="BioMuta" id="TIMM9"/>
<dbReference type="jPOST" id="Q9Y5J7"/>
<dbReference type="MassIVE" id="Q9Y5J7"/>
<dbReference type="PaxDb" id="9606-ENSP00000378588"/>
<dbReference type="PeptideAtlas" id="Q9Y5J7"/>
<dbReference type="ProteomicsDB" id="86422"/>
<dbReference type="Pumba" id="Q9Y5J7"/>
<dbReference type="Antibodypedia" id="116">
    <property type="antibodies" value="110 antibodies from 21 providers"/>
</dbReference>
<dbReference type="DNASU" id="26520"/>
<dbReference type="Ensembl" id="ENST00000395159.7">
    <property type="protein sequence ID" value="ENSP00000378588.2"/>
    <property type="gene ID" value="ENSG00000100575.14"/>
</dbReference>
<dbReference type="Ensembl" id="ENST00000555061.5">
    <property type="protein sequence ID" value="ENSP00000450638.1"/>
    <property type="gene ID" value="ENSG00000100575.14"/>
</dbReference>
<dbReference type="Ensembl" id="ENST00000555404.5">
    <property type="protein sequence ID" value="ENSP00000451198.1"/>
    <property type="gene ID" value="ENSG00000100575.14"/>
</dbReference>
<dbReference type="Ensembl" id="ENST00000555593.5">
    <property type="protein sequence ID" value="ENSP00000451006.1"/>
    <property type="gene ID" value="ENSG00000100575.14"/>
</dbReference>
<dbReference type="GeneID" id="26520"/>
<dbReference type="KEGG" id="hsa:26520"/>
<dbReference type="MANE-Select" id="ENST00000395159.7">
    <property type="protein sequence ID" value="ENSP00000378588.2"/>
    <property type="RefSeq nucleotide sequence ID" value="NM_012460.4"/>
    <property type="RefSeq protein sequence ID" value="NP_036592.1"/>
</dbReference>
<dbReference type="UCSC" id="uc001xds.4">
    <property type="organism name" value="human"/>
</dbReference>
<dbReference type="AGR" id="HGNC:11819"/>
<dbReference type="CTD" id="26520"/>
<dbReference type="DisGeNET" id="26520"/>
<dbReference type="GeneCards" id="TIMM9"/>
<dbReference type="HGNC" id="HGNC:11819">
    <property type="gene designation" value="TIMM9"/>
</dbReference>
<dbReference type="HPA" id="ENSG00000100575">
    <property type="expression patterns" value="Low tissue specificity"/>
</dbReference>
<dbReference type="MIM" id="607384">
    <property type="type" value="gene"/>
</dbReference>
<dbReference type="neXtProt" id="NX_Q9Y5J7"/>
<dbReference type="OpenTargets" id="ENSG00000100575"/>
<dbReference type="PharmGKB" id="PA36525"/>
<dbReference type="VEuPathDB" id="HostDB:ENSG00000100575"/>
<dbReference type="eggNOG" id="KOG3479">
    <property type="taxonomic scope" value="Eukaryota"/>
</dbReference>
<dbReference type="GeneTree" id="ENSGT00940000160102"/>
<dbReference type="HOGENOM" id="CLU_141397_3_3_1"/>
<dbReference type="InParanoid" id="Q9Y5J7"/>
<dbReference type="OMA" id="QDFLRMY"/>
<dbReference type="OrthoDB" id="1551503at2759"/>
<dbReference type="PAN-GO" id="Q9Y5J7">
    <property type="GO annotations" value="0 GO annotations based on evolutionary models"/>
</dbReference>
<dbReference type="PhylomeDB" id="Q9Y5J7"/>
<dbReference type="TreeFam" id="TF106192"/>
<dbReference type="PathwayCommons" id="Q9Y5J7"/>
<dbReference type="Reactome" id="R-HSA-1268020">
    <property type="pathway name" value="Mitochondrial protein import"/>
</dbReference>
<dbReference type="Reactome" id="R-HSA-9837999">
    <property type="pathway name" value="Mitochondrial protein degradation"/>
</dbReference>
<dbReference type="SignaLink" id="Q9Y5J7"/>
<dbReference type="SIGNOR" id="Q9Y5J7"/>
<dbReference type="BioGRID-ORCS" id="26520">
    <property type="hits" value="506 hits in 1144 CRISPR screens"/>
</dbReference>
<dbReference type="CD-CODE" id="91857CE7">
    <property type="entry name" value="Nucleolus"/>
</dbReference>
<dbReference type="ChiTaRS" id="TIMM9">
    <property type="organism name" value="human"/>
</dbReference>
<dbReference type="EvolutionaryTrace" id="Q9Y5J7"/>
<dbReference type="GeneWiki" id="TIMM9"/>
<dbReference type="GenomeRNAi" id="26520"/>
<dbReference type="Pharos" id="Q9Y5J7">
    <property type="development level" value="Tbio"/>
</dbReference>
<dbReference type="PRO" id="PR:Q9Y5J7"/>
<dbReference type="Proteomes" id="UP000005640">
    <property type="component" value="Chromosome 14"/>
</dbReference>
<dbReference type="RNAct" id="Q9Y5J7">
    <property type="molecule type" value="protein"/>
</dbReference>
<dbReference type="Bgee" id="ENSG00000100575">
    <property type="expression patterns" value="Expressed in body of pancreas and 199 other cell types or tissues"/>
</dbReference>
<dbReference type="ExpressionAtlas" id="Q9Y5J7">
    <property type="expression patterns" value="baseline and differential"/>
</dbReference>
<dbReference type="GO" id="GO:0005743">
    <property type="term" value="C:mitochondrial inner membrane"/>
    <property type="evidence" value="ECO:0000314"/>
    <property type="project" value="BHF-UCL"/>
</dbReference>
<dbReference type="GO" id="GO:0005758">
    <property type="term" value="C:mitochondrial intermembrane space"/>
    <property type="evidence" value="ECO:0000314"/>
    <property type="project" value="ComplexPortal"/>
</dbReference>
<dbReference type="GO" id="GO:0042719">
    <property type="term" value="C:mitochondrial intermembrane space protein transporter complex"/>
    <property type="evidence" value="ECO:0000314"/>
    <property type="project" value="BHF-UCL"/>
</dbReference>
<dbReference type="GO" id="GO:0005739">
    <property type="term" value="C:mitochondrion"/>
    <property type="evidence" value="ECO:0000314"/>
    <property type="project" value="HPA"/>
</dbReference>
<dbReference type="GO" id="GO:0042721">
    <property type="term" value="C:TIM22 mitochondrial import inner membrane insertion complex"/>
    <property type="evidence" value="ECO:0000353"/>
    <property type="project" value="ComplexPortal"/>
</dbReference>
<dbReference type="GO" id="GO:0032977">
    <property type="term" value="F:membrane insertase activity"/>
    <property type="evidence" value="ECO:0000314"/>
    <property type="project" value="BHF-UCL"/>
</dbReference>
<dbReference type="GO" id="GO:0042803">
    <property type="term" value="F:protein homodimerization activity"/>
    <property type="evidence" value="ECO:0000353"/>
    <property type="project" value="BHF-UCL"/>
</dbReference>
<dbReference type="GO" id="GO:0051087">
    <property type="term" value="F:protein-folding chaperone binding"/>
    <property type="evidence" value="ECO:0000353"/>
    <property type="project" value="BHF-UCL"/>
</dbReference>
<dbReference type="GO" id="GO:0008270">
    <property type="term" value="F:zinc ion binding"/>
    <property type="evidence" value="ECO:0000304"/>
    <property type="project" value="ProtInc"/>
</dbReference>
<dbReference type="GO" id="GO:0045039">
    <property type="term" value="P:protein insertion into mitochondrial inner membrane"/>
    <property type="evidence" value="ECO:0000314"/>
    <property type="project" value="BHF-UCL"/>
</dbReference>
<dbReference type="GO" id="GO:0006626">
    <property type="term" value="P:protein targeting to mitochondrion"/>
    <property type="evidence" value="ECO:0000304"/>
    <property type="project" value="ProtInc"/>
</dbReference>
<dbReference type="GO" id="GO:0007605">
    <property type="term" value="P:sensory perception of sound"/>
    <property type="evidence" value="ECO:0000304"/>
    <property type="project" value="ProtInc"/>
</dbReference>
<dbReference type="FunFam" id="1.10.287.810:FF:000004">
    <property type="entry name" value="Mitochondrial import inner membrane translocase subunit Tim9"/>
    <property type="match status" value="1"/>
</dbReference>
<dbReference type="Gene3D" id="1.10.287.810">
    <property type="entry name" value="Mitochondrial import inner membrane translocase subunit tim13 like domains"/>
    <property type="match status" value="1"/>
</dbReference>
<dbReference type="InterPro" id="IPR050673">
    <property type="entry name" value="Mito_inner_translocase_sub"/>
</dbReference>
<dbReference type="InterPro" id="IPR004217">
    <property type="entry name" value="Tim10-like"/>
</dbReference>
<dbReference type="InterPro" id="IPR035427">
    <property type="entry name" value="Tim10-like_dom_sf"/>
</dbReference>
<dbReference type="PANTHER" id="PTHR13172">
    <property type="entry name" value="MITOCHONDRIAL IMPORT INNER MEMBRANE TRANSLOCASE SUBUNIT TIM9B"/>
    <property type="match status" value="1"/>
</dbReference>
<dbReference type="Pfam" id="PF02953">
    <property type="entry name" value="zf-Tim10_DDP"/>
    <property type="match status" value="1"/>
</dbReference>
<dbReference type="SUPFAM" id="SSF144122">
    <property type="entry name" value="Tim10-like"/>
    <property type="match status" value="1"/>
</dbReference>
<protein>
    <recommendedName>
        <fullName>Mitochondrial import inner membrane translocase subunit Tim9</fullName>
    </recommendedName>
</protein>
<reference key="1">
    <citation type="journal article" date="1999" name="FEBS Lett.">
        <title>The mitochondrial TIM22 preprotein translocase is highly conserved throughout the eukaryotic kingdom.</title>
        <authorList>
            <person name="Bauer M.F."/>
            <person name="Rothbauer U."/>
            <person name="Muehlenbein N."/>
            <person name="Smith R.J.H."/>
            <person name="Gerbitz K.-D."/>
            <person name="Neupert W."/>
            <person name="Brunner M."/>
            <person name="Hofmann S."/>
        </authorList>
    </citation>
    <scope>NUCLEOTIDE SEQUENCE [MRNA]</scope>
    <scope>TISSUE SPECIFICITY</scope>
</reference>
<reference key="2">
    <citation type="journal article" date="1999" name="Genomics">
        <title>The human family of deafness/dystonia peptide (DDP) related mitochondrial import proteins.</title>
        <authorList>
            <person name="Jin H."/>
            <person name="Kendall E."/>
            <person name="Freeman T.C."/>
            <person name="Roberts R.G."/>
            <person name="Vetrie D.L.P."/>
        </authorList>
    </citation>
    <scope>NUCLEOTIDE SEQUENCE [MRNA]</scope>
    <scope>TISSUE SPECIFICITY</scope>
</reference>
<reference key="3">
    <citation type="journal article" date="2004" name="Nat. Genet.">
        <title>Complete sequencing and characterization of 21,243 full-length human cDNAs.</title>
        <authorList>
            <person name="Ota T."/>
            <person name="Suzuki Y."/>
            <person name="Nishikawa T."/>
            <person name="Otsuki T."/>
            <person name="Sugiyama T."/>
            <person name="Irie R."/>
            <person name="Wakamatsu A."/>
            <person name="Hayashi K."/>
            <person name="Sato H."/>
            <person name="Nagai K."/>
            <person name="Kimura K."/>
            <person name="Makita H."/>
            <person name="Sekine M."/>
            <person name="Obayashi M."/>
            <person name="Nishi T."/>
            <person name="Shibahara T."/>
            <person name="Tanaka T."/>
            <person name="Ishii S."/>
            <person name="Yamamoto J."/>
            <person name="Saito K."/>
            <person name="Kawai Y."/>
            <person name="Isono Y."/>
            <person name="Nakamura Y."/>
            <person name="Nagahari K."/>
            <person name="Murakami K."/>
            <person name="Yasuda T."/>
            <person name="Iwayanagi T."/>
            <person name="Wagatsuma M."/>
            <person name="Shiratori A."/>
            <person name="Sudo H."/>
            <person name="Hosoiri T."/>
            <person name="Kaku Y."/>
            <person name="Kodaira H."/>
            <person name="Kondo H."/>
            <person name="Sugawara M."/>
            <person name="Takahashi M."/>
            <person name="Kanda K."/>
            <person name="Yokoi T."/>
            <person name="Furuya T."/>
            <person name="Kikkawa E."/>
            <person name="Omura Y."/>
            <person name="Abe K."/>
            <person name="Kamihara K."/>
            <person name="Katsuta N."/>
            <person name="Sato K."/>
            <person name="Tanikawa M."/>
            <person name="Yamazaki M."/>
            <person name="Ninomiya K."/>
            <person name="Ishibashi T."/>
            <person name="Yamashita H."/>
            <person name="Murakawa K."/>
            <person name="Fujimori K."/>
            <person name="Tanai H."/>
            <person name="Kimata M."/>
            <person name="Watanabe M."/>
            <person name="Hiraoka S."/>
            <person name="Chiba Y."/>
            <person name="Ishida S."/>
            <person name="Ono Y."/>
            <person name="Takiguchi S."/>
            <person name="Watanabe S."/>
            <person name="Yosida M."/>
            <person name="Hotuta T."/>
            <person name="Kusano J."/>
            <person name="Kanehori K."/>
            <person name="Takahashi-Fujii A."/>
            <person name="Hara H."/>
            <person name="Tanase T.-O."/>
            <person name="Nomura Y."/>
            <person name="Togiya S."/>
            <person name="Komai F."/>
            <person name="Hara R."/>
            <person name="Takeuchi K."/>
            <person name="Arita M."/>
            <person name="Imose N."/>
            <person name="Musashino K."/>
            <person name="Yuuki H."/>
            <person name="Oshima A."/>
            <person name="Sasaki N."/>
            <person name="Aotsuka S."/>
            <person name="Yoshikawa Y."/>
            <person name="Matsunawa H."/>
            <person name="Ichihara T."/>
            <person name="Shiohata N."/>
            <person name="Sano S."/>
            <person name="Moriya S."/>
            <person name="Momiyama H."/>
            <person name="Satoh N."/>
            <person name="Takami S."/>
            <person name="Terashima Y."/>
            <person name="Suzuki O."/>
            <person name="Nakagawa S."/>
            <person name="Senoh A."/>
            <person name="Mizoguchi H."/>
            <person name="Goto Y."/>
            <person name="Shimizu F."/>
            <person name="Wakebe H."/>
            <person name="Hishigaki H."/>
            <person name="Watanabe T."/>
            <person name="Sugiyama A."/>
            <person name="Takemoto M."/>
            <person name="Kawakami B."/>
            <person name="Yamazaki M."/>
            <person name="Watanabe K."/>
            <person name="Kumagai A."/>
            <person name="Itakura S."/>
            <person name="Fukuzumi Y."/>
            <person name="Fujimori Y."/>
            <person name="Komiyama M."/>
            <person name="Tashiro H."/>
            <person name="Tanigami A."/>
            <person name="Fujiwara T."/>
            <person name="Ono T."/>
            <person name="Yamada K."/>
            <person name="Fujii Y."/>
            <person name="Ozaki K."/>
            <person name="Hirao M."/>
            <person name="Ohmori Y."/>
            <person name="Kawabata A."/>
            <person name="Hikiji T."/>
            <person name="Kobatake N."/>
            <person name="Inagaki H."/>
            <person name="Ikema Y."/>
            <person name="Okamoto S."/>
            <person name="Okitani R."/>
            <person name="Kawakami T."/>
            <person name="Noguchi S."/>
            <person name="Itoh T."/>
            <person name="Shigeta K."/>
            <person name="Senba T."/>
            <person name="Matsumura K."/>
            <person name="Nakajima Y."/>
            <person name="Mizuno T."/>
            <person name="Morinaga M."/>
            <person name="Sasaki M."/>
            <person name="Togashi T."/>
            <person name="Oyama M."/>
            <person name="Hata H."/>
            <person name="Watanabe M."/>
            <person name="Komatsu T."/>
            <person name="Mizushima-Sugano J."/>
            <person name="Satoh T."/>
            <person name="Shirai Y."/>
            <person name="Takahashi Y."/>
            <person name="Nakagawa K."/>
            <person name="Okumura K."/>
            <person name="Nagase T."/>
            <person name="Nomura N."/>
            <person name="Kikuchi H."/>
            <person name="Masuho Y."/>
            <person name="Yamashita R."/>
            <person name="Nakai K."/>
            <person name="Yada T."/>
            <person name="Nakamura Y."/>
            <person name="Ohara O."/>
            <person name="Isogai T."/>
            <person name="Sugano S."/>
        </authorList>
    </citation>
    <scope>NUCLEOTIDE SEQUENCE [LARGE SCALE MRNA]</scope>
    <source>
        <tissue>Hippocampus</tissue>
    </source>
</reference>
<reference key="4">
    <citation type="submission" date="2005-07" db="EMBL/GenBank/DDBJ databases">
        <authorList>
            <person name="Mural R.J."/>
            <person name="Istrail S."/>
            <person name="Sutton G.G."/>
            <person name="Florea L."/>
            <person name="Halpern A.L."/>
            <person name="Mobarry C.M."/>
            <person name="Lippert R."/>
            <person name="Walenz B."/>
            <person name="Shatkay H."/>
            <person name="Dew I."/>
            <person name="Miller J.R."/>
            <person name="Flanigan M.J."/>
            <person name="Edwards N.J."/>
            <person name="Bolanos R."/>
            <person name="Fasulo D."/>
            <person name="Halldorsson B.V."/>
            <person name="Hannenhalli S."/>
            <person name="Turner R."/>
            <person name="Yooseph S."/>
            <person name="Lu F."/>
            <person name="Nusskern D.R."/>
            <person name="Shue B.C."/>
            <person name="Zheng X.H."/>
            <person name="Zhong F."/>
            <person name="Delcher A.L."/>
            <person name="Huson D.H."/>
            <person name="Kravitz S.A."/>
            <person name="Mouchard L."/>
            <person name="Reinert K."/>
            <person name="Remington K.A."/>
            <person name="Clark A.G."/>
            <person name="Waterman M.S."/>
            <person name="Eichler E.E."/>
            <person name="Adams M.D."/>
            <person name="Hunkapiller M.W."/>
            <person name="Myers E.W."/>
            <person name="Venter J.C."/>
        </authorList>
    </citation>
    <scope>NUCLEOTIDE SEQUENCE [LARGE SCALE GENOMIC DNA]</scope>
</reference>
<reference key="5">
    <citation type="journal article" date="2004" name="Genome Res.">
        <title>The status, quality, and expansion of the NIH full-length cDNA project: the Mammalian Gene Collection (MGC).</title>
        <authorList>
            <consortium name="The MGC Project Team"/>
        </authorList>
    </citation>
    <scope>NUCLEOTIDE SEQUENCE [LARGE SCALE MRNA]</scope>
    <source>
        <tissue>Placenta</tissue>
        <tissue>Skin</tissue>
    </source>
</reference>
<reference key="6">
    <citation type="journal article" date="2001" name="J. Biol. Chem.">
        <title>Role of the deafness dystonia peptide 1 (DDP1) in import of human Tim23 into the inner membrane of mitochondria.</title>
        <authorList>
            <person name="Rothbauer U."/>
            <person name="Hofmann S."/>
            <person name="Muehlenbein N."/>
            <person name="Paschen S.A."/>
            <person name="Gerbitz K.-D."/>
            <person name="Neupert W."/>
            <person name="Brunner M."/>
            <person name="Bauer M.F."/>
        </authorList>
    </citation>
    <scope>SUBCELLULAR LOCATION</scope>
</reference>
<reference key="7">
    <citation type="journal article" date="2004" name="J. Biol. Chem.">
        <title>Organization and function of the small Tim complexes acting along the import pathway of metabolite carriers into mammalian mitochondria.</title>
        <authorList>
            <person name="Muehlenbein N."/>
            <person name="Hofmann S."/>
            <person name="Rothbauer U."/>
            <person name="Bauer M.F."/>
        </authorList>
    </citation>
    <scope>FUNCTION</scope>
    <scope>SUBCELLULAR LOCATION</scope>
    <scope>INTERACTION WITH TIMM10; TIMM22 AND FXC1</scope>
</reference>
<reference key="8">
    <citation type="journal article" date="2009" name="Anal. Chem.">
        <title>Lys-N and trypsin cover complementary parts of the phosphoproteome in a refined SCX-based approach.</title>
        <authorList>
            <person name="Gauci S."/>
            <person name="Helbig A.O."/>
            <person name="Slijper M."/>
            <person name="Krijgsveld J."/>
            <person name="Heck A.J."/>
            <person name="Mohammed S."/>
        </authorList>
    </citation>
    <scope>ACETYLATION [LARGE SCALE ANALYSIS] AT ALA-2</scope>
    <scope>CLEAVAGE OF INITIATOR METHIONINE [LARGE SCALE ANALYSIS]</scope>
    <scope>IDENTIFICATION BY MASS SPECTROMETRY [LARGE SCALE ANALYSIS]</scope>
</reference>
<reference key="9">
    <citation type="journal article" date="2011" name="BMC Syst. Biol.">
        <title>Initial characterization of the human central proteome.</title>
        <authorList>
            <person name="Burkard T.R."/>
            <person name="Planyavsky M."/>
            <person name="Kaupe I."/>
            <person name="Breitwieser F.P."/>
            <person name="Buerckstuemmer T."/>
            <person name="Bennett K.L."/>
            <person name="Superti-Furga G."/>
            <person name="Colinge J."/>
        </authorList>
    </citation>
    <scope>IDENTIFICATION BY MASS SPECTROMETRY [LARGE SCALE ANALYSIS]</scope>
</reference>
<reference key="10">
    <citation type="journal article" date="2015" name="Proteomics">
        <title>N-terminome analysis of the human mitochondrial proteome.</title>
        <authorList>
            <person name="Vaca Jacome A.S."/>
            <person name="Rabilloud T."/>
            <person name="Schaeffer-Reiss C."/>
            <person name="Rompais M."/>
            <person name="Ayoub D."/>
            <person name="Lane L."/>
            <person name="Bairoch A."/>
            <person name="Van Dorsselaer A."/>
            <person name="Carapito C."/>
        </authorList>
    </citation>
    <scope>IDENTIFICATION BY MASS SPECTROMETRY [LARGE SCALE ANALYSIS]</scope>
</reference>
<reference key="11">
    <citation type="journal article" date="2006" name="Mol. Cell">
        <title>Crystal structure of the mitochondrial chaperone TIM9.10 reveals a six-bladed alpha-propeller.</title>
        <authorList>
            <person name="Webb C.T."/>
            <person name="Gorman M.A."/>
            <person name="Lazarou M."/>
            <person name="Ryan M.T."/>
            <person name="Gulbis J.M."/>
        </authorList>
    </citation>
    <scope>X-RAY CRYSTALLOGRAPHY (3.3 ANGSTROMS) IN COMPLEX WITH TIMM10</scope>
    <scope>DISULFIDE BONDS</scope>
</reference>
<gene>
    <name type="primary">TIMM9</name>
    <name type="synonym">TIM9</name>
    <name type="synonym">TIM9A</name>
    <name type="synonym">TIMM9A</name>
</gene>
<sequence>MAAQIPESDQIKQFKEFLGTYNKLTETCFLDCVKDFTTREVKPEETTCSEHCLQKYLKMTQRISMRFQEYHIQQNEALAAKAGLLGQPR</sequence>
<feature type="initiator methionine" description="Removed" evidence="7">
    <location>
        <position position="1"/>
    </location>
</feature>
<feature type="chain" id="PRO_0000193595" description="Mitochondrial import inner membrane translocase subunit Tim9">
    <location>
        <begin position="2"/>
        <end position="89"/>
    </location>
</feature>
<feature type="short sequence motif" description="Twin CX3C motif">
    <location>
        <begin position="28"/>
        <end position="52"/>
    </location>
</feature>
<feature type="modified residue" description="N-acetylalanine" evidence="7">
    <location>
        <position position="2"/>
    </location>
</feature>
<feature type="disulfide bond" evidence="5">
    <location>
        <begin position="28"/>
        <end position="52"/>
    </location>
</feature>
<feature type="disulfide bond" evidence="5">
    <location>
        <begin position="32"/>
        <end position="48"/>
    </location>
</feature>
<feature type="helix" evidence="8">
    <location>
        <begin position="15"/>
        <end position="32"/>
    </location>
</feature>
<feature type="strand" evidence="8">
    <location>
        <begin position="37"/>
        <end position="40"/>
    </location>
</feature>
<feature type="helix" evidence="8">
    <location>
        <begin position="43"/>
        <end position="71"/>
    </location>
</feature>
<feature type="strand" evidence="8">
    <location>
        <begin position="72"/>
        <end position="75"/>
    </location>
</feature>
<feature type="helix" evidence="8">
    <location>
        <begin position="76"/>
        <end position="81"/>
    </location>
</feature>
<evidence type="ECO:0000269" key="1">
    <source>
    </source>
</evidence>
<evidence type="ECO:0000269" key="2">
    <source>
    </source>
</evidence>
<evidence type="ECO:0000269" key="3">
    <source>
    </source>
</evidence>
<evidence type="ECO:0000269" key="4">
    <source>
    </source>
</evidence>
<evidence type="ECO:0000269" key="5">
    <source>
    </source>
</evidence>
<evidence type="ECO:0000305" key="6"/>
<evidence type="ECO:0007744" key="7">
    <source>
    </source>
</evidence>
<evidence type="ECO:0007829" key="8">
    <source>
        <dbReference type="PDB" id="2BSK"/>
    </source>
</evidence>
<organism>
    <name type="scientific">Homo sapiens</name>
    <name type="common">Human</name>
    <dbReference type="NCBI Taxonomy" id="9606"/>
    <lineage>
        <taxon>Eukaryota</taxon>
        <taxon>Metazoa</taxon>
        <taxon>Chordata</taxon>
        <taxon>Craniata</taxon>
        <taxon>Vertebrata</taxon>
        <taxon>Euteleostomi</taxon>
        <taxon>Mammalia</taxon>
        <taxon>Eutheria</taxon>
        <taxon>Euarchontoglires</taxon>
        <taxon>Primates</taxon>
        <taxon>Haplorrhini</taxon>
        <taxon>Catarrhini</taxon>
        <taxon>Hominidae</taxon>
        <taxon>Homo</taxon>
    </lineage>
</organism>
<name>TIM9_HUMAN</name>
<proteinExistence type="evidence at protein level"/>